<keyword id="KW-0010">Activator</keyword>
<keyword id="KW-0175">Coiled coil</keyword>
<keyword id="KW-0539">Nucleus</keyword>
<keyword id="KW-1185">Reference proteome</keyword>
<keyword id="KW-0804">Transcription</keyword>
<keyword id="KW-0805">Transcription regulation</keyword>
<proteinExistence type="evidence at transcript level"/>
<protein>
    <recommendedName>
        <fullName>RNA polymerase-associated protein LEO1</fullName>
    </recommendedName>
</protein>
<dbReference type="EMBL" id="BC094174">
    <property type="protein sequence ID" value="AAH94174.1"/>
    <property type="molecule type" value="mRNA"/>
</dbReference>
<dbReference type="RefSeq" id="NP_001085280.1">
    <property type="nucleotide sequence ID" value="NM_001091811.2"/>
</dbReference>
<dbReference type="SMR" id="Q52KV5"/>
<dbReference type="BioGRID" id="101772">
    <property type="interactions" value="1"/>
</dbReference>
<dbReference type="IntAct" id="Q52KV5">
    <property type="interactions" value="1"/>
</dbReference>
<dbReference type="DNASU" id="443607"/>
<dbReference type="GeneID" id="443607"/>
<dbReference type="KEGG" id="xla:443607"/>
<dbReference type="AGR" id="Xenbase:XB-GENE-5828312"/>
<dbReference type="CTD" id="443607"/>
<dbReference type="Xenbase" id="XB-GENE-5828312">
    <property type="gene designation" value="leo1.S"/>
</dbReference>
<dbReference type="OrthoDB" id="20844at2759"/>
<dbReference type="Proteomes" id="UP000186698">
    <property type="component" value="Chromosome 3S"/>
</dbReference>
<dbReference type="Bgee" id="443607">
    <property type="expression patterns" value="Expressed in gastrula and 19 other cell types or tissues"/>
</dbReference>
<dbReference type="GO" id="GO:0016593">
    <property type="term" value="C:Cdc73/Paf1 complex"/>
    <property type="evidence" value="ECO:0000250"/>
    <property type="project" value="UniProtKB"/>
</dbReference>
<dbReference type="GO" id="GO:0005634">
    <property type="term" value="C:nucleus"/>
    <property type="evidence" value="ECO:0000318"/>
    <property type="project" value="GO_Central"/>
</dbReference>
<dbReference type="GO" id="GO:1990269">
    <property type="term" value="F:RNA polymerase II C-terminal domain phosphoserine binding"/>
    <property type="evidence" value="ECO:0000318"/>
    <property type="project" value="GO_Central"/>
</dbReference>
<dbReference type="GO" id="GO:0032968">
    <property type="term" value="P:positive regulation of transcription elongation by RNA polymerase II"/>
    <property type="evidence" value="ECO:0000318"/>
    <property type="project" value="GO_Central"/>
</dbReference>
<dbReference type="GO" id="GO:0006368">
    <property type="term" value="P:transcription elongation by RNA polymerase II"/>
    <property type="evidence" value="ECO:0000250"/>
    <property type="project" value="UniProtKB"/>
</dbReference>
<dbReference type="InterPro" id="IPR007149">
    <property type="entry name" value="Leo1"/>
</dbReference>
<dbReference type="PANTHER" id="PTHR23146">
    <property type="entry name" value="LEO1 PROTEIN"/>
    <property type="match status" value="1"/>
</dbReference>
<dbReference type="PANTHER" id="PTHR23146:SF0">
    <property type="entry name" value="RNA POLYMERASE-ASSOCIATED PROTEIN LEO1"/>
    <property type="match status" value="1"/>
</dbReference>
<dbReference type="Pfam" id="PF04004">
    <property type="entry name" value="Leo1"/>
    <property type="match status" value="1"/>
</dbReference>
<sequence length="703" mass="80407">MADMEDLFGSDAESENEQKESDSGSGSDSEPGNDGSGSNRSGSDSDRDEDDEHSAVKPSNKELFGDDSEDEVGSQHSGSYNRSERSYNASETAHSDQEVNDQSDAEQHSGSEALHDEDNDEDVGQRSDHSSPRSEADGSDKDANSDDEKWGREDKSDQSDEEEKMQNSDDELQHSDRDEHRQSDEEGQRPSSDAEEQETHQSDDEEQDNHHSDDLHNSDDEENDQQHYNDRPHSDGEEQDHRQSEDEENELQHSDDEQERQRSDDERQRSDDEINEHRQSDDEDRQHSDGDNVRHHSDDEHKSESQKGSDSEEEIGRQRRKKAIASDSDLDSDDDEPKAKQNASDLFGDADDISSGSDGEDKPPTPGQPMDDDGMDQDQPEETAPETRIEVEIPKVNTDLGNDLYFVKLPNFLSVEPRPFDPQYYEDEFEDEEMLDEEGRTRLKLKVENTIRWRTRKDEEGNDVRDSNARIVKWSDGSMSLHLGNEVFDVYKAPLQGDHNHLFIRQGTGLQGQAVFKTKLTFRPHSTDSATHRKMTLSLADRCSKTQKIRILPMAGRDPESQRSEMIKKEEERLRASIRRESQQRRMREKQHQRGLSANYLEPDRYDDEEEGDESISLAAIKNRYKGGREERARIYSSDSDEGSDEDKAQRLLKAKKLNSDEEDQDEEGEISGKRKAEEDEDKASKKPKKYVISDDEEDEEEL</sequence>
<organism>
    <name type="scientific">Xenopus laevis</name>
    <name type="common">African clawed frog</name>
    <dbReference type="NCBI Taxonomy" id="8355"/>
    <lineage>
        <taxon>Eukaryota</taxon>
        <taxon>Metazoa</taxon>
        <taxon>Chordata</taxon>
        <taxon>Craniata</taxon>
        <taxon>Vertebrata</taxon>
        <taxon>Euteleostomi</taxon>
        <taxon>Amphibia</taxon>
        <taxon>Batrachia</taxon>
        <taxon>Anura</taxon>
        <taxon>Pipoidea</taxon>
        <taxon>Pipidae</taxon>
        <taxon>Xenopodinae</taxon>
        <taxon>Xenopus</taxon>
        <taxon>Xenopus</taxon>
    </lineage>
</organism>
<comment type="function">
    <text evidence="1">Component of the PAF1 complex (PAF1C) which has multiple functions during transcription by RNA polymerase II. PAF1C associates with RNA polymerase II, is involved in transcriptional elongation and in histone modifications including methylation on histone H3 'Lys-4' (H3K4me3) (By similarity).</text>
</comment>
<comment type="subunit">
    <text evidence="2 3">Component of the PAF1 complex, which at least consists of cdc73, paf1, leo1, ctr9 and rtf1 (By similarity). The PAF1 complex interacts with PHF5A (By similarity).</text>
</comment>
<comment type="subcellular location">
    <subcellularLocation>
        <location evidence="1">Nucleus</location>
    </subcellularLocation>
</comment>
<comment type="similarity">
    <text evidence="6">Belongs to the LEO1 family.</text>
</comment>
<accession>Q52KV5</accession>
<name>LEO1_XENLA</name>
<evidence type="ECO:0000250" key="1"/>
<evidence type="ECO:0000250" key="2">
    <source>
        <dbReference type="UniProtKB" id="Q5XJE5"/>
    </source>
</evidence>
<evidence type="ECO:0000250" key="3">
    <source>
        <dbReference type="UniProtKB" id="Q8WVC0"/>
    </source>
</evidence>
<evidence type="ECO:0000255" key="4"/>
<evidence type="ECO:0000256" key="5">
    <source>
        <dbReference type="SAM" id="MobiDB-lite"/>
    </source>
</evidence>
<evidence type="ECO:0000305" key="6"/>
<gene>
    <name type="primary">leo1</name>
</gene>
<feature type="chain" id="PRO_0000247824" description="RNA polymerase-associated protein LEO1">
    <location>
        <begin position="1"/>
        <end position="703"/>
    </location>
</feature>
<feature type="region of interest" description="Disordered" evidence="5">
    <location>
        <begin position="1"/>
        <end position="391"/>
    </location>
</feature>
<feature type="region of interest" description="Disordered" evidence="5">
    <location>
        <begin position="553"/>
        <end position="572"/>
    </location>
</feature>
<feature type="region of interest" description="Disordered" evidence="5">
    <location>
        <begin position="578"/>
        <end position="613"/>
    </location>
</feature>
<feature type="region of interest" description="Disordered" evidence="5">
    <location>
        <begin position="627"/>
        <end position="703"/>
    </location>
</feature>
<feature type="coiled-coil region" evidence="4">
    <location>
        <begin position="242"/>
        <end position="279"/>
    </location>
</feature>
<feature type="compositionally biased region" description="Acidic residues" evidence="5">
    <location>
        <begin position="1"/>
        <end position="15"/>
    </location>
</feature>
<feature type="compositionally biased region" description="Low complexity" evidence="5">
    <location>
        <begin position="23"/>
        <end position="42"/>
    </location>
</feature>
<feature type="compositionally biased region" description="Basic and acidic residues" evidence="5">
    <location>
        <begin position="53"/>
        <end position="64"/>
    </location>
</feature>
<feature type="compositionally biased region" description="Polar residues" evidence="5">
    <location>
        <begin position="74"/>
        <end position="92"/>
    </location>
</feature>
<feature type="compositionally biased region" description="Basic and acidic residues" evidence="5">
    <location>
        <begin position="105"/>
        <end position="116"/>
    </location>
</feature>
<feature type="compositionally biased region" description="Basic and acidic residues" evidence="5">
    <location>
        <begin position="123"/>
        <end position="188"/>
    </location>
</feature>
<feature type="compositionally biased region" description="Basic and acidic residues" evidence="5">
    <location>
        <begin position="197"/>
        <end position="317"/>
    </location>
</feature>
<feature type="compositionally biased region" description="Acidic residues" evidence="5">
    <location>
        <begin position="370"/>
        <end position="384"/>
    </location>
</feature>
<feature type="compositionally biased region" description="Basic and acidic residues" evidence="5">
    <location>
        <begin position="557"/>
        <end position="572"/>
    </location>
</feature>
<feature type="compositionally biased region" description="Basic and acidic residues" evidence="5">
    <location>
        <begin position="578"/>
        <end position="592"/>
    </location>
</feature>
<feature type="compositionally biased region" description="Acidic residues" evidence="5">
    <location>
        <begin position="661"/>
        <end position="670"/>
    </location>
</feature>
<feature type="compositionally biased region" description="Acidic residues" evidence="5">
    <location>
        <begin position="694"/>
        <end position="703"/>
    </location>
</feature>
<reference key="1">
    <citation type="submission" date="2005-04" db="EMBL/GenBank/DDBJ databases">
        <authorList>
            <consortium name="NIH - Xenopus Gene Collection (XGC) project"/>
        </authorList>
    </citation>
    <scope>NUCLEOTIDE SEQUENCE [LARGE SCALE MRNA]</scope>
    <source>
        <tissue>Brain</tissue>
    </source>
</reference>